<sequence>MSLDRIMNEAISPWMKGDGPDSDIVLSSRIRLARNFKKYQFSTMQNEEEAKQIHELFKKKFIKKPVEPFGEFELLKMNELNPLQRRVLVEKHLISPNLAGTEYGACLLSESEHISIMLNEEDHVRIQCLFSGLQLSEALQSANQIDNWIEEQVEYAFDESLGYITSCPTNVGTGLRASVMIHLPGLVLTKRINRIIQVIQKLGLVVRGIYGEGSEALGNIFQVSNQMTLGKSEEDIIADLKSVIQQIIHQEKTARELIVQNSSIELEDKVYRSYGILANSRLIQSAEAATCLSDVRLGIDLGYIQGISRNILTELMVLTQPGILQQYAGGPLGPEERDYRRATLIRERLRIEQN</sequence>
<name>MCSB_BACMK</name>
<comment type="function">
    <text evidence="1">Catalyzes the specific phosphorylation of arginine residues in a large number of proteins. Is part of the bacterial stress response system. Protein arginine phosphorylation has a physiologically important role and is involved in the regulation of many critical cellular processes, such as protein homeostasis, motility, competence, and stringent and stress responses, by regulating gene expression and protein activity.</text>
</comment>
<comment type="catalytic activity">
    <reaction evidence="1">
        <text>L-arginyl-[protein] + ATP = N(omega)-phospho-L-arginyl-[protein] + ADP + H(+)</text>
        <dbReference type="Rhea" id="RHEA:43384"/>
        <dbReference type="Rhea" id="RHEA-COMP:10532"/>
        <dbReference type="Rhea" id="RHEA-COMP:10533"/>
        <dbReference type="ChEBI" id="CHEBI:15378"/>
        <dbReference type="ChEBI" id="CHEBI:29965"/>
        <dbReference type="ChEBI" id="CHEBI:30616"/>
        <dbReference type="ChEBI" id="CHEBI:83226"/>
        <dbReference type="ChEBI" id="CHEBI:456216"/>
        <dbReference type="EC" id="2.7.14.1"/>
    </reaction>
</comment>
<comment type="activity regulation">
    <text evidence="1">Appears to be allosterically activated by the binding of pArg-containing polypeptides to the pArg-binding pocket localized in the C-terminal domain of McsB.</text>
</comment>
<comment type="similarity">
    <text evidence="1">Belongs to the ATP:guanido phosphotransferase family.</text>
</comment>
<feature type="chain" id="PRO_1000130110" description="Protein-arginine kinase">
    <location>
        <begin position="1"/>
        <end position="354"/>
    </location>
</feature>
<feature type="domain" description="Phosphagen kinase C-terminal" evidence="1">
    <location>
        <begin position="24"/>
        <end position="254"/>
    </location>
</feature>
<feature type="short sequence motif" description="RDXXRA motif of the pArg binding pocket involved in allosteric regulation" evidence="1">
    <location>
        <begin position="337"/>
        <end position="342"/>
    </location>
</feature>
<feature type="binding site" evidence="1">
    <location>
        <begin position="27"/>
        <end position="31"/>
    </location>
    <ligand>
        <name>ATP</name>
        <dbReference type="ChEBI" id="CHEBI:30616"/>
    </ligand>
</feature>
<feature type="binding site" evidence="1">
    <location>
        <position position="92"/>
    </location>
    <ligand>
        <name>ATP</name>
        <dbReference type="ChEBI" id="CHEBI:30616"/>
    </ligand>
</feature>
<feature type="binding site" evidence="1">
    <location>
        <position position="125"/>
    </location>
    <ligand>
        <name>ATP</name>
        <dbReference type="ChEBI" id="CHEBI:30616"/>
    </ligand>
</feature>
<feature type="binding site" evidence="1">
    <location>
        <begin position="176"/>
        <end position="180"/>
    </location>
    <ligand>
        <name>ATP</name>
        <dbReference type="ChEBI" id="CHEBI:30616"/>
    </ligand>
</feature>
<feature type="binding site" evidence="1">
    <location>
        <begin position="207"/>
        <end position="212"/>
    </location>
    <ligand>
        <name>ATP</name>
        <dbReference type="ChEBI" id="CHEBI:30616"/>
    </ligand>
</feature>
<accession>A9VN93</accession>
<keyword id="KW-0021">Allosteric enzyme</keyword>
<keyword id="KW-0067">ATP-binding</keyword>
<keyword id="KW-0418">Kinase</keyword>
<keyword id="KW-0547">Nucleotide-binding</keyword>
<keyword id="KW-0808">Transferase</keyword>
<dbReference type="EC" id="2.7.14.1" evidence="1"/>
<dbReference type="EMBL" id="CP000903">
    <property type="protein sequence ID" value="ABY41344.1"/>
    <property type="molecule type" value="Genomic_DNA"/>
</dbReference>
<dbReference type="RefSeq" id="WP_002169332.1">
    <property type="nucleotide sequence ID" value="NC_010184.1"/>
</dbReference>
<dbReference type="SMR" id="A9VN93"/>
<dbReference type="KEGG" id="bwe:BcerKBAB4_0075"/>
<dbReference type="eggNOG" id="COG3869">
    <property type="taxonomic scope" value="Bacteria"/>
</dbReference>
<dbReference type="HOGENOM" id="CLU_066591_1_0_9"/>
<dbReference type="Proteomes" id="UP000002154">
    <property type="component" value="Chromosome"/>
</dbReference>
<dbReference type="GO" id="GO:0005615">
    <property type="term" value="C:extracellular space"/>
    <property type="evidence" value="ECO:0007669"/>
    <property type="project" value="TreeGrafter"/>
</dbReference>
<dbReference type="GO" id="GO:0005524">
    <property type="term" value="F:ATP binding"/>
    <property type="evidence" value="ECO:0007669"/>
    <property type="project" value="UniProtKB-KW"/>
</dbReference>
<dbReference type="GO" id="GO:0004111">
    <property type="term" value="F:creatine kinase activity"/>
    <property type="evidence" value="ECO:0007669"/>
    <property type="project" value="InterPro"/>
</dbReference>
<dbReference type="GO" id="GO:0004672">
    <property type="term" value="F:protein kinase activity"/>
    <property type="evidence" value="ECO:0007669"/>
    <property type="project" value="UniProtKB-UniRule"/>
</dbReference>
<dbReference type="GO" id="GO:0046314">
    <property type="term" value="P:phosphocreatine biosynthetic process"/>
    <property type="evidence" value="ECO:0007669"/>
    <property type="project" value="InterPro"/>
</dbReference>
<dbReference type="CDD" id="cd07930">
    <property type="entry name" value="bacterial_phosphagen_kinase"/>
    <property type="match status" value="1"/>
</dbReference>
<dbReference type="FunFam" id="3.30.590.10:FF:000007">
    <property type="entry name" value="Protein-arginine kinase"/>
    <property type="match status" value="1"/>
</dbReference>
<dbReference type="Gene3D" id="3.30.590.10">
    <property type="entry name" value="Glutamine synthetase/guanido kinase, catalytic domain"/>
    <property type="match status" value="1"/>
</dbReference>
<dbReference type="HAMAP" id="MF_00602">
    <property type="entry name" value="Prot_Arg_kinase"/>
    <property type="match status" value="1"/>
</dbReference>
<dbReference type="InterPro" id="IPR023660">
    <property type="entry name" value="Arg_Kinase"/>
</dbReference>
<dbReference type="InterPro" id="IPR000749">
    <property type="entry name" value="ATP-guanido_PTrfase"/>
</dbReference>
<dbReference type="InterPro" id="IPR022415">
    <property type="entry name" value="ATP-guanido_PTrfase_AS"/>
</dbReference>
<dbReference type="InterPro" id="IPR022414">
    <property type="entry name" value="ATP-guanido_PTrfase_cat"/>
</dbReference>
<dbReference type="InterPro" id="IPR014746">
    <property type="entry name" value="Gln_synth/guanido_kin_cat_dom"/>
</dbReference>
<dbReference type="NCBIfam" id="NF002194">
    <property type="entry name" value="PRK01059.1-4"/>
    <property type="match status" value="1"/>
</dbReference>
<dbReference type="NCBIfam" id="NF002195">
    <property type="entry name" value="PRK01059.1-5"/>
    <property type="match status" value="1"/>
</dbReference>
<dbReference type="PANTHER" id="PTHR11547:SF38">
    <property type="entry name" value="ARGININE KINASE 1-RELATED"/>
    <property type="match status" value="1"/>
</dbReference>
<dbReference type="PANTHER" id="PTHR11547">
    <property type="entry name" value="ARGININE OR CREATINE KINASE"/>
    <property type="match status" value="1"/>
</dbReference>
<dbReference type="Pfam" id="PF00217">
    <property type="entry name" value="ATP-gua_Ptrans"/>
    <property type="match status" value="1"/>
</dbReference>
<dbReference type="SUPFAM" id="SSF55931">
    <property type="entry name" value="Glutamine synthetase/guanido kinase"/>
    <property type="match status" value="1"/>
</dbReference>
<dbReference type="PROSITE" id="PS00112">
    <property type="entry name" value="PHOSPHAGEN_KINASE"/>
    <property type="match status" value="1"/>
</dbReference>
<dbReference type="PROSITE" id="PS51510">
    <property type="entry name" value="PHOSPHAGEN_KINASE_C"/>
    <property type="match status" value="1"/>
</dbReference>
<reference key="1">
    <citation type="journal article" date="2008" name="Chem. Biol. Interact.">
        <title>Extending the Bacillus cereus group genomics to putative food-borne pathogens of different toxicity.</title>
        <authorList>
            <person name="Lapidus A."/>
            <person name="Goltsman E."/>
            <person name="Auger S."/>
            <person name="Galleron N."/>
            <person name="Segurens B."/>
            <person name="Dossat C."/>
            <person name="Land M.L."/>
            <person name="Broussolle V."/>
            <person name="Brillard J."/>
            <person name="Guinebretiere M.-H."/>
            <person name="Sanchis V."/>
            <person name="Nguen-the C."/>
            <person name="Lereclus D."/>
            <person name="Richardson P."/>
            <person name="Wincker P."/>
            <person name="Weissenbach J."/>
            <person name="Ehrlich S.D."/>
            <person name="Sorokin A."/>
        </authorList>
    </citation>
    <scope>NUCLEOTIDE SEQUENCE [LARGE SCALE GENOMIC DNA]</scope>
    <source>
        <strain>KBAB4</strain>
    </source>
</reference>
<gene>
    <name evidence="1" type="primary">mcsB</name>
    <name type="ordered locus">BcerKBAB4_0075</name>
</gene>
<evidence type="ECO:0000255" key="1">
    <source>
        <dbReference type="HAMAP-Rule" id="MF_00602"/>
    </source>
</evidence>
<proteinExistence type="inferred from homology"/>
<protein>
    <recommendedName>
        <fullName evidence="1">Protein-arginine kinase</fullName>
        <ecNumber evidence="1">2.7.14.1</ecNumber>
    </recommendedName>
</protein>
<organism>
    <name type="scientific">Bacillus mycoides (strain KBAB4)</name>
    <name type="common">Bacillus weihenstephanensis</name>
    <dbReference type="NCBI Taxonomy" id="315730"/>
    <lineage>
        <taxon>Bacteria</taxon>
        <taxon>Bacillati</taxon>
        <taxon>Bacillota</taxon>
        <taxon>Bacilli</taxon>
        <taxon>Bacillales</taxon>
        <taxon>Bacillaceae</taxon>
        <taxon>Bacillus</taxon>
        <taxon>Bacillus cereus group</taxon>
    </lineage>
</organism>